<feature type="chain" id="PRO_0000084092" description="Ribosomal RNA-processing protein 8">
    <location>
        <begin position="1"/>
        <end position="457"/>
    </location>
</feature>
<feature type="region of interest" description="Disordered" evidence="3">
    <location>
        <begin position="52"/>
        <end position="114"/>
    </location>
</feature>
<feature type="region of interest" description="Disordered" evidence="3">
    <location>
        <begin position="148"/>
        <end position="235"/>
    </location>
</feature>
<feature type="compositionally biased region" description="Polar residues" evidence="3">
    <location>
        <begin position="148"/>
        <end position="165"/>
    </location>
</feature>
<feature type="compositionally biased region" description="Polar residues" evidence="3">
    <location>
        <begin position="174"/>
        <end position="183"/>
    </location>
</feature>
<feature type="compositionally biased region" description="Basic residues" evidence="3">
    <location>
        <begin position="184"/>
        <end position="203"/>
    </location>
</feature>
<feature type="binding site" evidence="2">
    <location>
        <position position="282"/>
    </location>
    <ligand>
        <name>S-adenosyl-L-methionine</name>
        <dbReference type="ChEBI" id="CHEBI:59789"/>
    </ligand>
</feature>
<feature type="binding site" evidence="2">
    <location>
        <position position="317"/>
    </location>
    <ligand>
        <name>S-adenosyl-L-methionine</name>
        <dbReference type="ChEBI" id="CHEBI:59789"/>
    </ligand>
</feature>
<feature type="binding site" evidence="2">
    <location>
        <position position="335"/>
    </location>
    <ligand>
        <name>S-adenosyl-L-methionine</name>
        <dbReference type="ChEBI" id="CHEBI:59789"/>
    </ligand>
</feature>
<feature type="binding site" evidence="2">
    <location>
        <position position="347"/>
    </location>
    <ligand>
        <name>S-adenosyl-L-methionine</name>
        <dbReference type="ChEBI" id="CHEBI:59789"/>
    </ligand>
</feature>
<feature type="binding site" evidence="2">
    <location>
        <position position="348"/>
    </location>
    <ligand>
        <name>S-adenosyl-L-methionine</name>
        <dbReference type="ChEBI" id="CHEBI:59789"/>
    </ligand>
</feature>
<feature type="binding site" evidence="2">
    <location>
        <position position="364"/>
    </location>
    <ligand>
        <name>S-adenosyl-L-methionine</name>
        <dbReference type="ChEBI" id="CHEBI:59789"/>
    </ligand>
</feature>
<feature type="modified residue" description="Phosphoserine" evidence="5">
    <location>
        <position position="62"/>
    </location>
</feature>
<feature type="modified residue" description="Phosphoserine" evidence="5">
    <location>
        <position position="64"/>
    </location>
</feature>
<feature type="modified residue" description="Phosphoserine" evidence="2">
    <location>
        <position position="105"/>
    </location>
</feature>
<feature type="modified residue" description="Phosphoserine" evidence="2">
    <location>
        <position position="172"/>
    </location>
</feature>
<feature type="modified residue" description="Phosphoserine" evidence="2">
    <location>
        <position position="177"/>
    </location>
</feature>
<accession>Q5U4F0</accession>
<keyword id="KW-0156">Chromatin regulator</keyword>
<keyword id="KW-0489">Methyltransferase</keyword>
<keyword id="KW-0539">Nucleus</keyword>
<keyword id="KW-0597">Phosphoprotein</keyword>
<keyword id="KW-1185">Reference proteome</keyword>
<keyword id="KW-0678">Repressor</keyword>
<keyword id="KW-0698">rRNA processing</keyword>
<keyword id="KW-0949">S-adenosyl-L-methionine</keyword>
<keyword id="KW-0804">Transcription</keyword>
<keyword id="KW-0805">Transcription regulation</keyword>
<keyword id="KW-0808">Transferase</keyword>
<reference key="1">
    <citation type="journal article" date="2004" name="Genome Res.">
        <title>The status, quality, and expansion of the NIH full-length cDNA project: the Mammalian Gene Collection (MGC).</title>
        <authorList>
            <consortium name="The MGC Project Team"/>
        </authorList>
    </citation>
    <scope>NUCLEOTIDE SEQUENCE [LARGE SCALE MRNA]</scope>
    <source>
        <tissue>Kidney</tissue>
    </source>
</reference>
<reference key="2">
    <citation type="journal article" date="2012" name="Nat. Commun.">
        <title>Quantitative maps of protein phosphorylation sites across 14 different rat organs and tissues.</title>
        <authorList>
            <person name="Lundby A."/>
            <person name="Secher A."/>
            <person name="Lage K."/>
            <person name="Nordsborg N.B."/>
            <person name="Dmytriyev A."/>
            <person name="Lundby C."/>
            <person name="Olsen J.V."/>
        </authorList>
    </citation>
    <scope>PHOSPHORYLATION [LARGE SCALE ANALYSIS] AT SER-62 AND SER-64</scope>
    <scope>IDENTIFICATION BY MASS SPECTROMETRY [LARGE SCALE ANALYSIS]</scope>
</reference>
<evidence type="ECO:0000250" key="1"/>
<evidence type="ECO:0000250" key="2">
    <source>
        <dbReference type="UniProtKB" id="O43159"/>
    </source>
</evidence>
<evidence type="ECO:0000256" key="3">
    <source>
        <dbReference type="SAM" id="MobiDB-lite"/>
    </source>
</evidence>
<evidence type="ECO:0000305" key="4"/>
<evidence type="ECO:0007744" key="5">
    <source>
    </source>
</evidence>
<organism>
    <name type="scientific">Rattus norvegicus</name>
    <name type="common">Rat</name>
    <dbReference type="NCBI Taxonomy" id="10116"/>
    <lineage>
        <taxon>Eukaryota</taxon>
        <taxon>Metazoa</taxon>
        <taxon>Chordata</taxon>
        <taxon>Craniata</taxon>
        <taxon>Vertebrata</taxon>
        <taxon>Euteleostomi</taxon>
        <taxon>Mammalia</taxon>
        <taxon>Eutheria</taxon>
        <taxon>Euarchontoglires</taxon>
        <taxon>Glires</taxon>
        <taxon>Rodentia</taxon>
        <taxon>Myomorpha</taxon>
        <taxon>Muroidea</taxon>
        <taxon>Muridae</taxon>
        <taxon>Murinae</taxon>
        <taxon>Rattus</taxon>
    </lineage>
</organism>
<sequence length="457" mass="51216">MFEEPEWVEAAPAIVGLRPVTTQVQAATAPPVKGRKRRHLLATLRALEAASLSQQCPSLPGSDSEEEEEVGRKKRHFQRSSLANVSKEVGKKRKGKCQKQAPFISDSEGKEVERTCHRQAPPLGGISAGEEKGKRKCQEYSYLHPTQSLNSVDQTVHNSRTSTATLDPPKSSRESASPNSSHTLSRKQWRNRQKNKRRHKNKFRPLETQDQVPLKASIEETEVPPAPKSDSQETRAGALRARMTQRLDGARFRYLNEQLYSGPSSAAQCLFQEDPEAFLLYHRGFQRQVKKWPLHPVDRIAKDLRQKPASLVVADFGCGDCRLASSVRNPVHCFDLAALDPRVTVCDMAQVPLEDESVDVAVFCLSLMGTNIRDFLEEANRVLKPGGLLKVAEVSSRFEDIRTFLGAVTKLGFKVIYKDLTNSHFFLFDFEKTGPPRVGPKAQLSGLKLQPCLYKHR</sequence>
<protein>
    <recommendedName>
        <fullName>Ribosomal RNA-processing protein 8</fullName>
        <ecNumber>2.1.1.-</ecNumber>
    </recommendedName>
    <alternativeName>
        <fullName>Cerebral protein 1 homolog</fullName>
    </alternativeName>
</protein>
<gene>
    <name type="primary">Rrp8</name>
</gene>
<comment type="function">
    <text evidence="1">Essential component of the eNoSC (energy-dependent nucleolar silencing) complex, a complex that mediates silencing of rDNA in response to intracellular energy status and acts by recruiting histone-modifying enzymes. The eNoSC complex is able to sense the energy status of cell: upon glucose starvation, elevation of NAD(+)/NADP(+) ratio activates SIRT1, leading to histone H3 deacetylation followed by dimethylation of H3 at 'Lys-9' (H3K9me2) by SUV39H1 and the formation of silent chromatin in the rDNA locus. In the complex, RRP8 binds to H3K9me2 and probably acts as a methyltransferase. Its substrates are however unknown (By similarity).</text>
</comment>
<comment type="subunit">
    <text evidence="1">Component of the eNoSC complex, composed of SIRT1, SUV39H1 and RRP8.</text>
</comment>
<comment type="subcellular location">
    <subcellularLocation>
        <location evidence="1">Nucleus</location>
        <location evidence="1">Nucleolus</location>
    </subcellularLocation>
    <text evidence="1">Localizes at rDNA locus.</text>
</comment>
<comment type="similarity">
    <text evidence="4">Belongs to the methyltransferase superfamily. RRP8 family.</text>
</comment>
<name>RRP8_RAT</name>
<dbReference type="EC" id="2.1.1.-"/>
<dbReference type="EMBL" id="BC085119">
    <property type="protein sequence ID" value="AAH85119.1"/>
    <property type="molecule type" value="mRNA"/>
</dbReference>
<dbReference type="RefSeq" id="NP_001008347.1">
    <property type="nucleotide sequence ID" value="NM_001008346.1"/>
</dbReference>
<dbReference type="SMR" id="Q5U4F0"/>
<dbReference type="FunCoup" id="Q5U4F0">
    <property type="interactions" value="2576"/>
</dbReference>
<dbReference type="STRING" id="10116.ENSRNOP00000025651"/>
<dbReference type="iPTMnet" id="Q5U4F0"/>
<dbReference type="PhosphoSitePlus" id="Q5U4F0"/>
<dbReference type="PaxDb" id="10116-ENSRNOP00000025651"/>
<dbReference type="GeneID" id="308911"/>
<dbReference type="KEGG" id="rno:308911"/>
<dbReference type="UCSC" id="RGD:1308302">
    <property type="organism name" value="rat"/>
</dbReference>
<dbReference type="AGR" id="RGD:1308302"/>
<dbReference type="CTD" id="23378"/>
<dbReference type="RGD" id="1308302">
    <property type="gene designation" value="Rrp8"/>
</dbReference>
<dbReference type="VEuPathDB" id="HostDB:ENSRNOG00000018766"/>
<dbReference type="eggNOG" id="KOG3045">
    <property type="taxonomic scope" value="Eukaryota"/>
</dbReference>
<dbReference type="HOGENOM" id="CLU_027694_2_3_1"/>
<dbReference type="InParanoid" id="Q5U4F0"/>
<dbReference type="OrthoDB" id="83270at9989"/>
<dbReference type="PhylomeDB" id="Q5U4F0"/>
<dbReference type="TreeFam" id="TF313749"/>
<dbReference type="Reactome" id="R-RNO-427359">
    <property type="pathway name" value="SIRT1 negatively regulates rRNA expression"/>
</dbReference>
<dbReference type="PRO" id="PR:Q5U4F0"/>
<dbReference type="Proteomes" id="UP000002494">
    <property type="component" value="Chromosome 1"/>
</dbReference>
<dbReference type="Bgee" id="ENSRNOG00000018766">
    <property type="expression patterns" value="Expressed in thymus and 20 other cell types or tissues"/>
</dbReference>
<dbReference type="ExpressionAtlas" id="Q5U4F0">
    <property type="expression patterns" value="baseline and differential"/>
</dbReference>
<dbReference type="GO" id="GO:0005677">
    <property type="term" value="C:chromatin silencing complex"/>
    <property type="evidence" value="ECO:0000250"/>
    <property type="project" value="UniProtKB"/>
</dbReference>
<dbReference type="GO" id="GO:0061773">
    <property type="term" value="C:eNoSc complex"/>
    <property type="evidence" value="ECO:0000266"/>
    <property type="project" value="RGD"/>
</dbReference>
<dbReference type="GO" id="GO:0005730">
    <property type="term" value="C:nucleolus"/>
    <property type="evidence" value="ECO:0000250"/>
    <property type="project" value="UniProtKB"/>
</dbReference>
<dbReference type="GO" id="GO:0033553">
    <property type="term" value="C:rDNA heterochromatin"/>
    <property type="evidence" value="ECO:0000250"/>
    <property type="project" value="UniProtKB"/>
</dbReference>
<dbReference type="GO" id="GO:0035064">
    <property type="term" value="F:methylated histone binding"/>
    <property type="evidence" value="ECO:0000250"/>
    <property type="project" value="UniProtKB"/>
</dbReference>
<dbReference type="GO" id="GO:0008168">
    <property type="term" value="F:methyltransferase activity"/>
    <property type="evidence" value="ECO:0007669"/>
    <property type="project" value="UniProtKB-KW"/>
</dbReference>
<dbReference type="GO" id="GO:0042149">
    <property type="term" value="P:cellular response to glucose starvation"/>
    <property type="evidence" value="ECO:0000266"/>
    <property type="project" value="RGD"/>
</dbReference>
<dbReference type="GO" id="GO:0097009">
    <property type="term" value="P:energy homeostasis"/>
    <property type="evidence" value="ECO:0000266"/>
    <property type="project" value="RGD"/>
</dbReference>
<dbReference type="GO" id="GO:0072332">
    <property type="term" value="P:intrinsic apoptotic signaling pathway by p53 class mediator"/>
    <property type="evidence" value="ECO:0000266"/>
    <property type="project" value="RGD"/>
</dbReference>
<dbReference type="GO" id="GO:0032259">
    <property type="term" value="P:methylation"/>
    <property type="evidence" value="ECO:0007669"/>
    <property type="project" value="UniProtKB-KW"/>
</dbReference>
<dbReference type="GO" id="GO:0045786">
    <property type="term" value="P:negative regulation of cell cycle"/>
    <property type="evidence" value="ECO:0000266"/>
    <property type="project" value="RGD"/>
</dbReference>
<dbReference type="GO" id="GO:0045892">
    <property type="term" value="P:negative regulation of DNA-templated transcription"/>
    <property type="evidence" value="ECO:0000266"/>
    <property type="project" value="RGD"/>
</dbReference>
<dbReference type="GO" id="GO:0000183">
    <property type="term" value="P:rDNA heterochromatin formation"/>
    <property type="evidence" value="ECO:0000250"/>
    <property type="project" value="UniProtKB"/>
</dbReference>
<dbReference type="GO" id="GO:1903450">
    <property type="term" value="P:regulation of G1 to G0 transition"/>
    <property type="evidence" value="ECO:0000266"/>
    <property type="project" value="RGD"/>
</dbReference>
<dbReference type="GO" id="GO:0046015">
    <property type="term" value="P:regulation of transcription by glucose"/>
    <property type="evidence" value="ECO:0000266"/>
    <property type="project" value="RGD"/>
</dbReference>
<dbReference type="GO" id="GO:0006364">
    <property type="term" value="P:rRNA processing"/>
    <property type="evidence" value="ECO:0007669"/>
    <property type="project" value="UniProtKB-KW"/>
</dbReference>
<dbReference type="CDD" id="cd02440">
    <property type="entry name" value="AdoMet_MTases"/>
    <property type="match status" value="1"/>
</dbReference>
<dbReference type="FunFam" id="1.10.10.2150:FF:000001">
    <property type="entry name" value="Ribosomal RNA-processing protein 8"/>
    <property type="match status" value="1"/>
</dbReference>
<dbReference type="FunFam" id="3.40.50.150:FF:000068">
    <property type="entry name" value="Ribosomal RNA-processing protein 8"/>
    <property type="match status" value="1"/>
</dbReference>
<dbReference type="Gene3D" id="1.10.10.2150">
    <property type="entry name" value="Ribosomal RNA-processing protein 8, N-terminal domain"/>
    <property type="match status" value="1"/>
</dbReference>
<dbReference type="Gene3D" id="3.40.50.150">
    <property type="entry name" value="Vaccinia Virus protein VP39"/>
    <property type="match status" value="1"/>
</dbReference>
<dbReference type="InterPro" id="IPR007823">
    <property type="entry name" value="RRP8"/>
</dbReference>
<dbReference type="InterPro" id="IPR042036">
    <property type="entry name" value="RRP8_N"/>
</dbReference>
<dbReference type="InterPro" id="IPR029063">
    <property type="entry name" value="SAM-dependent_MTases_sf"/>
</dbReference>
<dbReference type="InterPro" id="IPR023576">
    <property type="entry name" value="UbiE/COQ5_MeTrFase_CS"/>
</dbReference>
<dbReference type="PANTHER" id="PTHR12787">
    <property type="entry name" value="RIBOSOMAL RNA-PROCESSING PROTEIN 8"/>
    <property type="match status" value="1"/>
</dbReference>
<dbReference type="PANTHER" id="PTHR12787:SF0">
    <property type="entry name" value="RIBOSOMAL RNA-PROCESSING PROTEIN 8"/>
    <property type="match status" value="1"/>
</dbReference>
<dbReference type="Pfam" id="PF05148">
    <property type="entry name" value="Methyltransf_8"/>
    <property type="match status" value="1"/>
</dbReference>
<dbReference type="SUPFAM" id="SSF53335">
    <property type="entry name" value="S-adenosyl-L-methionine-dependent methyltransferases"/>
    <property type="match status" value="1"/>
</dbReference>
<proteinExistence type="evidence at protein level"/>